<proteinExistence type="inferred from homology"/>
<evidence type="ECO:0000255" key="1">
    <source>
        <dbReference type="HAMAP-Rule" id="MF_01341"/>
    </source>
</evidence>
<evidence type="ECO:0000256" key="2">
    <source>
        <dbReference type="SAM" id="MobiDB-lite"/>
    </source>
</evidence>
<evidence type="ECO:0000305" key="3"/>
<accession>A8GKH8</accession>
<feature type="chain" id="PRO_1000067669" description="Large ribosomal subunit protein uL15">
    <location>
        <begin position="1"/>
        <end position="144"/>
    </location>
</feature>
<feature type="region of interest" description="Disordered" evidence="2">
    <location>
        <begin position="1"/>
        <end position="53"/>
    </location>
</feature>
<feature type="compositionally biased region" description="Gly residues" evidence="2">
    <location>
        <begin position="21"/>
        <end position="31"/>
    </location>
</feature>
<gene>
    <name evidence="1" type="primary">rplO</name>
    <name type="ordered locus">Spro_4525</name>
</gene>
<protein>
    <recommendedName>
        <fullName evidence="1">Large ribosomal subunit protein uL15</fullName>
    </recommendedName>
    <alternativeName>
        <fullName evidence="3">50S ribosomal protein L15</fullName>
    </alternativeName>
</protein>
<keyword id="KW-0687">Ribonucleoprotein</keyword>
<keyword id="KW-0689">Ribosomal protein</keyword>
<keyword id="KW-0694">RNA-binding</keyword>
<keyword id="KW-0699">rRNA-binding</keyword>
<organism>
    <name type="scientific">Serratia proteamaculans (strain 568)</name>
    <dbReference type="NCBI Taxonomy" id="399741"/>
    <lineage>
        <taxon>Bacteria</taxon>
        <taxon>Pseudomonadati</taxon>
        <taxon>Pseudomonadota</taxon>
        <taxon>Gammaproteobacteria</taxon>
        <taxon>Enterobacterales</taxon>
        <taxon>Yersiniaceae</taxon>
        <taxon>Serratia</taxon>
    </lineage>
</organism>
<dbReference type="EMBL" id="CP000826">
    <property type="protein sequence ID" value="ABV43618.1"/>
    <property type="molecule type" value="Genomic_DNA"/>
</dbReference>
<dbReference type="SMR" id="A8GKH8"/>
<dbReference type="STRING" id="399741.Spro_4525"/>
<dbReference type="KEGG" id="spe:Spro_4525"/>
<dbReference type="eggNOG" id="COG0200">
    <property type="taxonomic scope" value="Bacteria"/>
</dbReference>
<dbReference type="HOGENOM" id="CLU_055188_4_2_6"/>
<dbReference type="OrthoDB" id="9810293at2"/>
<dbReference type="GO" id="GO:0022625">
    <property type="term" value="C:cytosolic large ribosomal subunit"/>
    <property type="evidence" value="ECO:0007669"/>
    <property type="project" value="TreeGrafter"/>
</dbReference>
<dbReference type="GO" id="GO:0019843">
    <property type="term" value="F:rRNA binding"/>
    <property type="evidence" value="ECO:0007669"/>
    <property type="project" value="UniProtKB-UniRule"/>
</dbReference>
<dbReference type="GO" id="GO:0003735">
    <property type="term" value="F:structural constituent of ribosome"/>
    <property type="evidence" value="ECO:0007669"/>
    <property type="project" value="InterPro"/>
</dbReference>
<dbReference type="GO" id="GO:0006412">
    <property type="term" value="P:translation"/>
    <property type="evidence" value="ECO:0007669"/>
    <property type="project" value="UniProtKB-UniRule"/>
</dbReference>
<dbReference type="FunFam" id="3.100.10.10:FF:000003">
    <property type="entry name" value="50S ribosomal protein L15"/>
    <property type="match status" value="1"/>
</dbReference>
<dbReference type="Gene3D" id="3.100.10.10">
    <property type="match status" value="1"/>
</dbReference>
<dbReference type="HAMAP" id="MF_01341">
    <property type="entry name" value="Ribosomal_uL15"/>
    <property type="match status" value="1"/>
</dbReference>
<dbReference type="InterPro" id="IPR030878">
    <property type="entry name" value="Ribosomal_uL15"/>
</dbReference>
<dbReference type="InterPro" id="IPR021131">
    <property type="entry name" value="Ribosomal_uL15/eL18"/>
</dbReference>
<dbReference type="InterPro" id="IPR036227">
    <property type="entry name" value="Ribosomal_uL15/eL18_sf"/>
</dbReference>
<dbReference type="InterPro" id="IPR005749">
    <property type="entry name" value="Ribosomal_uL15_bac-type"/>
</dbReference>
<dbReference type="InterPro" id="IPR001196">
    <property type="entry name" value="Ribosomal_uL15_CS"/>
</dbReference>
<dbReference type="NCBIfam" id="TIGR01071">
    <property type="entry name" value="rplO_bact"/>
    <property type="match status" value="1"/>
</dbReference>
<dbReference type="PANTHER" id="PTHR12934">
    <property type="entry name" value="50S RIBOSOMAL PROTEIN L15"/>
    <property type="match status" value="1"/>
</dbReference>
<dbReference type="PANTHER" id="PTHR12934:SF11">
    <property type="entry name" value="LARGE RIBOSOMAL SUBUNIT PROTEIN UL15M"/>
    <property type="match status" value="1"/>
</dbReference>
<dbReference type="Pfam" id="PF00828">
    <property type="entry name" value="Ribosomal_L27A"/>
    <property type="match status" value="1"/>
</dbReference>
<dbReference type="SUPFAM" id="SSF52080">
    <property type="entry name" value="Ribosomal proteins L15p and L18e"/>
    <property type="match status" value="1"/>
</dbReference>
<dbReference type="PROSITE" id="PS00475">
    <property type="entry name" value="RIBOSOMAL_L15"/>
    <property type="match status" value="1"/>
</dbReference>
<reference key="1">
    <citation type="submission" date="2007-09" db="EMBL/GenBank/DDBJ databases">
        <title>Complete sequence of chromosome of Serratia proteamaculans 568.</title>
        <authorList>
            <consortium name="US DOE Joint Genome Institute"/>
            <person name="Copeland A."/>
            <person name="Lucas S."/>
            <person name="Lapidus A."/>
            <person name="Barry K."/>
            <person name="Glavina del Rio T."/>
            <person name="Dalin E."/>
            <person name="Tice H."/>
            <person name="Pitluck S."/>
            <person name="Chain P."/>
            <person name="Malfatti S."/>
            <person name="Shin M."/>
            <person name="Vergez L."/>
            <person name="Schmutz J."/>
            <person name="Larimer F."/>
            <person name="Land M."/>
            <person name="Hauser L."/>
            <person name="Kyrpides N."/>
            <person name="Kim E."/>
            <person name="Taghavi S."/>
            <person name="Newman L."/>
            <person name="Vangronsveld J."/>
            <person name="van der Lelie D."/>
            <person name="Richardson P."/>
        </authorList>
    </citation>
    <scope>NUCLEOTIDE SEQUENCE [LARGE SCALE GENOMIC DNA]</scope>
    <source>
        <strain>568</strain>
    </source>
</reference>
<sequence length="144" mass="15162">MRLNTLSPAEGAKHAPKRVGRGIGSGLGKTAGRGHKGQNSRSGGGVRRGFEGGQMPLYRRLPKFGFTSRKAMITAEVRLSELALVEGDVIDLNTLKAANVVGVQIEFAKVMLSGEIARPVTLRGLRVTKGARAAIEAAGGKIEE</sequence>
<comment type="function">
    <text evidence="1">Binds to the 23S rRNA.</text>
</comment>
<comment type="subunit">
    <text evidence="1">Part of the 50S ribosomal subunit.</text>
</comment>
<comment type="similarity">
    <text evidence="1">Belongs to the universal ribosomal protein uL15 family.</text>
</comment>
<name>RL15_SERP5</name>